<evidence type="ECO:0000250" key="1">
    <source>
        <dbReference type="UniProtKB" id="Q13619"/>
    </source>
</evidence>
<evidence type="ECO:0000250" key="2">
    <source>
        <dbReference type="UniProtKB" id="Q13620"/>
    </source>
</evidence>
<evidence type="ECO:0000255" key="3"/>
<evidence type="ECO:0000255" key="4">
    <source>
        <dbReference type="PROSITE-ProRule" id="PRU00330"/>
    </source>
</evidence>
<evidence type="ECO:0000256" key="5">
    <source>
        <dbReference type="SAM" id="MobiDB-lite"/>
    </source>
</evidence>
<evidence type="ECO:0000269" key="6">
    <source>
    </source>
</evidence>
<evidence type="ECO:0000269" key="7">
    <source>
    </source>
</evidence>
<evidence type="ECO:0000269" key="8">
    <source>
    </source>
</evidence>
<evidence type="ECO:0000269" key="9">
    <source>
    </source>
</evidence>
<evidence type="ECO:0000269" key="10">
    <source>
    </source>
</evidence>
<evidence type="ECO:0000269" key="11">
    <source>
    </source>
</evidence>
<evidence type="ECO:0000269" key="12">
    <source>
    </source>
</evidence>
<evidence type="ECO:0000303" key="13">
    <source>
    </source>
</evidence>
<evidence type="ECO:0000303" key="14">
    <source>
    </source>
</evidence>
<evidence type="ECO:0000305" key="15"/>
<evidence type="ECO:0000312" key="16">
    <source>
        <dbReference type="EMBL" id="AAH04026.1"/>
    </source>
</evidence>
<evidence type="ECO:0000312" key="17">
    <source>
        <dbReference type="EMBL" id="AAH10347.1"/>
    </source>
</evidence>
<evidence type="ECO:0000312" key="18">
    <source>
        <dbReference type="EMBL" id="AAP84984.1"/>
    </source>
</evidence>
<evidence type="ECO:0000312" key="19">
    <source>
        <dbReference type="EMBL" id="BAC27992.1"/>
    </source>
</evidence>
<evidence type="ECO:0000312" key="20">
    <source>
        <dbReference type="EMBL" id="BAC41443.3"/>
    </source>
</evidence>
<evidence type="ECO:0000312" key="21">
    <source>
        <dbReference type="EMBL" id="BAE36141.1"/>
    </source>
</evidence>
<evidence type="ECO:0000312" key="22">
    <source>
        <dbReference type="EMBL" id="CAM17145.1"/>
    </source>
</evidence>
<evidence type="ECO:0000312" key="23">
    <source>
        <dbReference type="EMBL" id="EDL29019.1"/>
    </source>
</evidence>
<evidence type="ECO:0000312" key="24">
    <source>
        <dbReference type="MGI" id="MGI:1919834"/>
    </source>
</evidence>
<evidence type="ECO:0007744" key="25">
    <source>
    </source>
</evidence>
<dbReference type="EMBL" id="AY330868">
    <property type="protein sequence ID" value="AAP84984.1"/>
    <property type="molecule type" value="mRNA"/>
</dbReference>
<dbReference type="EMBL" id="AK012410">
    <property type="protein sequence ID" value="BAB28222.2"/>
    <property type="molecule type" value="mRNA"/>
</dbReference>
<dbReference type="EMBL" id="AK032701">
    <property type="protein sequence ID" value="BAC27992.1"/>
    <property type="molecule type" value="mRNA"/>
</dbReference>
<dbReference type="EMBL" id="AK160998">
    <property type="protein sequence ID" value="BAE36141.1"/>
    <property type="molecule type" value="mRNA"/>
</dbReference>
<dbReference type="EMBL" id="AL513356">
    <property type="protein sequence ID" value="CAM17145.1"/>
    <property type="molecule type" value="Genomic_DNA"/>
</dbReference>
<dbReference type="EMBL" id="CH466570">
    <property type="protein sequence ID" value="EDL29019.1"/>
    <property type="molecule type" value="Genomic_DNA"/>
</dbReference>
<dbReference type="EMBL" id="BC004026">
    <property type="protein sequence ID" value="AAH04026.1"/>
    <property type="status" value="ALT_INIT"/>
    <property type="molecule type" value="mRNA"/>
</dbReference>
<dbReference type="EMBL" id="BC010347">
    <property type="protein sequence ID" value="AAH10347.1"/>
    <property type="status" value="ALT_INIT"/>
    <property type="molecule type" value="mRNA"/>
</dbReference>
<dbReference type="EMBL" id="AB093259">
    <property type="protein sequence ID" value="BAC41443.3"/>
    <property type="status" value="ALT_INIT"/>
    <property type="molecule type" value="Transcribed_RNA"/>
</dbReference>
<dbReference type="CCDS" id="CCDS40948.1">
    <molecule id="A2A432-1"/>
</dbReference>
<dbReference type="RefSeq" id="NP_001103612.1">
    <molecule id="A2A432-1"/>
    <property type="nucleotide sequence ID" value="NM_001110142.1"/>
</dbReference>
<dbReference type="RefSeq" id="NP_082564.3">
    <molecule id="A2A432-1"/>
    <property type="nucleotide sequence ID" value="NM_028288.5"/>
</dbReference>
<dbReference type="SMR" id="A2A432"/>
<dbReference type="BioGRID" id="215452">
    <property type="interactions" value="64"/>
</dbReference>
<dbReference type="ComplexPortal" id="CPX-651">
    <property type="entry name" value="CRL4-DDB2 E3 ubiquitin ligase complex, CUL4B variant"/>
</dbReference>
<dbReference type="FunCoup" id="A2A432">
    <property type="interactions" value="3546"/>
</dbReference>
<dbReference type="IntAct" id="A2A432">
    <property type="interactions" value="2"/>
</dbReference>
<dbReference type="STRING" id="10090.ENSMUSP00000110771"/>
<dbReference type="GlyGen" id="A2A432">
    <property type="glycosylation" value="3 sites, 1 O-linked glycan (1 site)"/>
</dbReference>
<dbReference type="iPTMnet" id="A2A432"/>
<dbReference type="PhosphoSitePlus" id="A2A432"/>
<dbReference type="SwissPalm" id="A2A432"/>
<dbReference type="jPOST" id="A2A432"/>
<dbReference type="PaxDb" id="10090-ENSMUSP00000059276"/>
<dbReference type="PeptideAtlas" id="A2A432"/>
<dbReference type="ProteomicsDB" id="285230">
    <molecule id="A2A432-1"/>
</dbReference>
<dbReference type="ProteomicsDB" id="285231">
    <molecule id="A2A432-2"/>
</dbReference>
<dbReference type="Pumba" id="A2A432"/>
<dbReference type="Antibodypedia" id="531">
    <property type="antibodies" value="445 antibodies from 35 providers"/>
</dbReference>
<dbReference type="DNASU" id="72584"/>
<dbReference type="Ensembl" id="ENSMUST00000050083.6">
    <molecule id="A2A432-1"/>
    <property type="protein sequence ID" value="ENSMUSP00000059276.6"/>
    <property type="gene ID" value="ENSMUSG00000031095.16"/>
</dbReference>
<dbReference type="Ensembl" id="ENSMUST00000115118.8">
    <molecule id="A2A432-1"/>
    <property type="protein sequence ID" value="ENSMUSP00000110771.2"/>
    <property type="gene ID" value="ENSMUSG00000031095.16"/>
</dbReference>
<dbReference type="GeneID" id="72584"/>
<dbReference type="KEGG" id="mmu:72584"/>
<dbReference type="UCSC" id="uc009taa.2">
    <molecule id="A2A432-1"/>
    <property type="organism name" value="mouse"/>
</dbReference>
<dbReference type="AGR" id="MGI:1919834"/>
<dbReference type="CTD" id="8450"/>
<dbReference type="MGI" id="MGI:1919834">
    <property type="gene designation" value="Cul4b"/>
</dbReference>
<dbReference type="VEuPathDB" id="HostDB:ENSMUSG00000031095"/>
<dbReference type="eggNOG" id="KOG2167">
    <property type="taxonomic scope" value="Eukaryota"/>
</dbReference>
<dbReference type="GeneTree" id="ENSGT00940000155339"/>
<dbReference type="InParanoid" id="A2A432"/>
<dbReference type="OMA" id="NYQEQTW"/>
<dbReference type="OrthoDB" id="27073at2759"/>
<dbReference type="PhylomeDB" id="A2A432"/>
<dbReference type="TreeFam" id="TF101153"/>
<dbReference type="Reactome" id="R-MMU-110314">
    <property type="pathway name" value="Recognition of DNA damage by PCNA-containing replication complex"/>
</dbReference>
<dbReference type="Reactome" id="R-MMU-5696394">
    <property type="pathway name" value="DNA Damage Recognition in GG-NER"/>
</dbReference>
<dbReference type="Reactome" id="R-MMU-5696395">
    <property type="pathway name" value="Formation of Incision Complex in GG-NER"/>
</dbReference>
<dbReference type="Reactome" id="R-MMU-5696400">
    <property type="pathway name" value="Dual Incision in GG-NER"/>
</dbReference>
<dbReference type="Reactome" id="R-MMU-6781823">
    <property type="pathway name" value="Formation of TC-NER Pre-Incision Complex"/>
</dbReference>
<dbReference type="Reactome" id="R-MMU-6782135">
    <property type="pathway name" value="Dual incision in TC-NER"/>
</dbReference>
<dbReference type="Reactome" id="R-MMU-6782210">
    <property type="pathway name" value="Gap-filling DNA repair synthesis and ligation in TC-NER"/>
</dbReference>
<dbReference type="Reactome" id="R-MMU-8951664">
    <property type="pathway name" value="Neddylation"/>
</dbReference>
<dbReference type="UniPathway" id="UPA00143"/>
<dbReference type="BioGRID-ORCS" id="72584">
    <property type="hits" value="9 hits in 118 CRISPR screens"/>
</dbReference>
<dbReference type="ChiTaRS" id="Cul4b">
    <property type="organism name" value="mouse"/>
</dbReference>
<dbReference type="PRO" id="PR:A2A432"/>
<dbReference type="Proteomes" id="UP000000589">
    <property type="component" value="Chromosome X"/>
</dbReference>
<dbReference type="RNAct" id="A2A432">
    <property type="molecule type" value="protein"/>
</dbReference>
<dbReference type="Bgee" id="ENSMUSG00000031095">
    <property type="expression patterns" value="Expressed in secondary oocyte and 240 other cell types or tissues"/>
</dbReference>
<dbReference type="ExpressionAtlas" id="A2A432">
    <property type="expression patterns" value="baseline and differential"/>
</dbReference>
<dbReference type="GO" id="GO:0031464">
    <property type="term" value="C:Cul4A-RING E3 ubiquitin ligase complex"/>
    <property type="evidence" value="ECO:0000269"/>
    <property type="project" value="ComplexPortal"/>
</dbReference>
<dbReference type="GO" id="GO:0031465">
    <property type="term" value="C:Cul4B-RING E3 ubiquitin ligase complex"/>
    <property type="evidence" value="ECO:0000314"/>
    <property type="project" value="UniProtKB"/>
</dbReference>
<dbReference type="GO" id="GO:0005829">
    <property type="term" value="C:cytosol"/>
    <property type="evidence" value="ECO:0007669"/>
    <property type="project" value="Ensembl"/>
</dbReference>
<dbReference type="GO" id="GO:0005654">
    <property type="term" value="C:nucleoplasm"/>
    <property type="evidence" value="ECO:0007669"/>
    <property type="project" value="Ensembl"/>
</dbReference>
<dbReference type="GO" id="GO:0005634">
    <property type="term" value="C:nucleus"/>
    <property type="evidence" value="ECO:0000303"/>
    <property type="project" value="ComplexPortal"/>
</dbReference>
<dbReference type="GO" id="GO:0003684">
    <property type="term" value="F:damaged DNA binding"/>
    <property type="evidence" value="ECO:0007669"/>
    <property type="project" value="Ensembl"/>
</dbReference>
<dbReference type="GO" id="GO:0031625">
    <property type="term" value="F:ubiquitin protein ligase binding"/>
    <property type="evidence" value="ECO:0007669"/>
    <property type="project" value="InterPro"/>
</dbReference>
<dbReference type="GO" id="GO:0048708">
    <property type="term" value="P:astrocyte differentiation"/>
    <property type="evidence" value="ECO:0000315"/>
    <property type="project" value="MGI"/>
</dbReference>
<dbReference type="GO" id="GO:0034644">
    <property type="term" value="P:cellular response to UV"/>
    <property type="evidence" value="ECO:0000250"/>
    <property type="project" value="ComplexPortal"/>
</dbReference>
<dbReference type="GO" id="GO:0006974">
    <property type="term" value="P:DNA damage response"/>
    <property type="evidence" value="ECO:0000250"/>
    <property type="project" value="ComplexPortal"/>
</dbReference>
<dbReference type="GO" id="GO:0010467">
    <property type="term" value="P:gene expression"/>
    <property type="evidence" value="ECO:0000315"/>
    <property type="project" value="MGI"/>
</dbReference>
<dbReference type="GO" id="GO:0031175">
    <property type="term" value="P:neuron projection development"/>
    <property type="evidence" value="ECO:0007669"/>
    <property type="project" value="Ensembl"/>
</dbReference>
<dbReference type="GO" id="GO:1900087">
    <property type="term" value="P:positive regulation of G1/S transition of mitotic cell cycle"/>
    <property type="evidence" value="ECO:0000315"/>
    <property type="project" value="MGI"/>
</dbReference>
<dbReference type="GO" id="GO:0045732">
    <property type="term" value="P:positive regulation of protein catabolic process"/>
    <property type="evidence" value="ECO:0000315"/>
    <property type="project" value="MGI"/>
</dbReference>
<dbReference type="GO" id="GO:0010498">
    <property type="term" value="P:proteasomal protein catabolic process"/>
    <property type="evidence" value="ECO:0000266"/>
    <property type="project" value="MGI"/>
</dbReference>
<dbReference type="GO" id="GO:0000209">
    <property type="term" value="P:protein polyubiquitination"/>
    <property type="evidence" value="ECO:0000314"/>
    <property type="project" value="UniProtKB"/>
</dbReference>
<dbReference type="GO" id="GO:0042254">
    <property type="term" value="P:ribosome biogenesis"/>
    <property type="evidence" value="ECO:0000315"/>
    <property type="project" value="UniProtKB"/>
</dbReference>
<dbReference type="GO" id="GO:0006511">
    <property type="term" value="P:ubiquitin-dependent protein catabolic process"/>
    <property type="evidence" value="ECO:0000314"/>
    <property type="project" value="UniProtKB"/>
</dbReference>
<dbReference type="GO" id="GO:0070914">
    <property type="term" value="P:UV-damage excision repair"/>
    <property type="evidence" value="ECO:0007669"/>
    <property type="project" value="Ensembl"/>
</dbReference>
<dbReference type="FunFam" id="1.20.1310.10:FF:000003">
    <property type="entry name" value="Cullin 4A"/>
    <property type="match status" value="1"/>
</dbReference>
<dbReference type="FunFam" id="3.30.230.130:FF:000001">
    <property type="entry name" value="Cullin 4A"/>
    <property type="match status" value="1"/>
</dbReference>
<dbReference type="FunFam" id="1.10.10.10:FF:000050">
    <property type="entry name" value="Cullin 4B"/>
    <property type="match status" value="1"/>
</dbReference>
<dbReference type="FunFam" id="1.20.1310.10:FF:000004">
    <property type="entry name" value="Cullin 4B"/>
    <property type="match status" value="1"/>
</dbReference>
<dbReference type="FunFam" id="1.20.1310.10:FF:000008">
    <property type="entry name" value="Cullin 4B"/>
    <property type="match status" value="1"/>
</dbReference>
<dbReference type="FunFam" id="1.20.1310.10:FF:000059">
    <property type="entry name" value="Cullin-4B"/>
    <property type="match status" value="1"/>
</dbReference>
<dbReference type="Gene3D" id="1.20.1310.10">
    <property type="entry name" value="Cullin Repeats"/>
    <property type="match status" value="4"/>
</dbReference>
<dbReference type="Gene3D" id="3.30.230.130">
    <property type="entry name" value="Cullin, Chain C, Domain 2"/>
    <property type="match status" value="1"/>
</dbReference>
<dbReference type="Gene3D" id="1.10.10.10">
    <property type="entry name" value="Winged helix-like DNA-binding domain superfamily/Winged helix DNA-binding domain"/>
    <property type="match status" value="1"/>
</dbReference>
<dbReference type="InterPro" id="IPR045093">
    <property type="entry name" value="Cullin"/>
</dbReference>
<dbReference type="InterPro" id="IPR016157">
    <property type="entry name" value="Cullin_CS"/>
</dbReference>
<dbReference type="InterPro" id="IPR016158">
    <property type="entry name" value="Cullin_homology"/>
</dbReference>
<dbReference type="InterPro" id="IPR036317">
    <property type="entry name" value="Cullin_homology_sf"/>
</dbReference>
<dbReference type="InterPro" id="IPR001373">
    <property type="entry name" value="Cullin_N"/>
</dbReference>
<dbReference type="InterPro" id="IPR019559">
    <property type="entry name" value="Cullin_neddylation_domain"/>
</dbReference>
<dbReference type="InterPro" id="IPR016159">
    <property type="entry name" value="Cullin_repeat-like_dom_sf"/>
</dbReference>
<dbReference type="InterPro" id="IPR036388">
    <property type="entry name" value="WH-like_DNA-bd_sf"/>
</dbReference>
<dbReference type="InterPro" id="IPR036390">
    <property type="entry name" value="WH_DNA-bd_sf"/>
</dbReference>
<dbReference type="PANTHER" id="PTHR11932">
    <property type="entry name" value="CULLIN"/>
    <property type="match status" value="1"/>
</dbReference>
<dbReference type="Pfam" id="PF00888">
    <property type="entry name" value="Cullin"/>
    <property type="match status" value="1"/>
</dbReference>
<dbReference type="Pfam" id="PF10557">
    <property type="entry name" value="Cullin_Nedd8"/>
    <property type="match status" value="1"/>
</dbReference>
<dbReference type="SMART" id="SM00182">
    <property type="entry name" value="CULLIN"/>
    <property type="match status" value="1"/>
</dbReference>
<dbReference type="SMART" id="SM00884">
    <property type="entry name" value="Cullin_Nedd8"/>
    <property type="match status" value="1"/>
</dbReference>
<dbReference type="SUPFAM" id="SSF75632">
    <property type="entry name" value="Cullin homology domain"/>
    <property type="match status" value="1"/>
</dbReference>
<dbReference type="SUPFAM" id="SSF74788">
    <property type="entry name" value="Cullin repeat-like"/>
    <property type="match status" value="1"/>
</dbReference>
<dbReference type="SUPFAM" id="SSF46785">
    <property type="entry name" value="Winged helix' DNA-binding domain"/>
    <property type="match status" value="1"/>
</dbReference>
<dbReference type="PROSITE" id="PS01256">
    <property type="entry name" value="CULLIN_1"/>
    <property type="match status" value="1"/>
</dbReference>
<dbReference type="PROSITE" id="PS50069">
    <property type="entry name" value="CULLIN_2"/>
    <property type="match status" value="1"/>
</dbReference>
<accession>A2A432</accession>
<accession>Q3TU30</accession>
<accession>Q8BSL3</accession>
<accession>Q8CHD6</accession>
<accession>Q91YZ7</accession>
<accession>Q99KS9</accession>
<accession>Q9CZM5</accession>
<proteinExistence type="evidence at protein level"/>
<comment type="function">
    <text evidence="2 12">Core component of multiple cullin-RING-based E3 ubiquitin-protein ligase complexes which mediate the ubiquitination and subsequent proteasomal degradation of target proteins (PubMed:35197566). The functional specificity of the E3 ubiquitin-protein ligase complex depends on the variable substrate recognition subunit (PubMed:35197566). CUL4B may act within the complex as a scaffold protein, contributing to catalysis through positioning of the substrate and the ubiquitin-conjugating enzyme (PubMed:35197566). Plays a role as part of the E3 ubiquitin-protein ligase complex in polyubiquitination of CDT1, histone H2A, histone H3 and histone H4 in response to radiation-induced DNA damage (By similarity). Targeted to UV damaged chromatin by DDB2 and may be important for DNA repair and DNA replication (By similarity). A number of DCX complexes (containing either TRPC4AP or DCAF12 as substrate-recognition component) are part of the DesCEND (destruction via C-end degrons) pathway, which recognizes a C-degron located at the extreme C terminus of target proteins, leading to their ubiquitination and degradation (By similarity). The DCX(AMBRA1) complex is a master regulator of the transition from G1 to S cell phase by mediating ubiquitination of phosphorylated cyclin-D (CCND1, CCND2 and CCND3) (By similarity). The DCX(AMBRA1) complex also acts as a regulator of Cul5-RING (CRL5) E3 ubiquitin-protein ligase complexes by mediating ubiquitination and degradation of Elongin-C (ELOC) component of CRL5 complexes (By similarity). Required for ubiquitination of cyclin E (CCNE1 or CCNE2), and consequently, normal G1 cell cycle progression (By similarity). Component of the DCX(WDR77) complex, which mediates ubiquitination and degradation of Irgm1 in intestinal cells (PubMed:35197566). Regulates the mammalian target-of-rapamycin (mTOR) pathway involved in control of cell growth, size and metabolism (By similarity). Specific CUL4B regulation of the mTORC1-mediated pathway is dependent upon 26S proteasome function and requires interaction between CUL4B and MLST8 (By similarity). With CUL4A, contributes to ribosome biogenesis (By similarity).</text>
</comment>
<comment type="pathway">
    <text evidence="12">Protein modification; protein ubiquitination.</text>
</comment>
<comment type="subunit">
    <text evidence="2 12">Component of multiple DCX (DDB1-CUL4-X-box) E3 ubiquitin-protein ligase complexes that seem to be formed of DDB1, CUL4A or CUL4B, RBX1 and a variable substrate recognition component which seems to belong to a protein family described as DCAF (Ddb1- and Cul4-associated factor) or CDW (CUL4-DDB1-associated WD40-repeat) proteins. Component of the DCX(DTL) complex with the putative substrate recognition component DTL. Component of the DCX(DDB2) complex with the putative substrate recognition component DDB2. Component of DCX complexes part of the DesCEND (destruction via C-end degrons) pathway, which contain either TRPC4AP or DCAF12 as substrate-recognition component. Component of the DCX(AMBRA1) complex with the substrate recognition component AMBRA1. Part of a complex with RBX1 and TIP120A/CAND1. Component of the DCX(WDR77) complex, composed of Cul4b, Ddb1, Wdr77 and Rbx1 (PubMed:35197566). Interacts with RBX1, GRWD1, MLST8, SMU1, TLE2, TLE3, DCAF1, DDA1, DCAF6, DCAF17, DDB2, DCAF8, TIP120A/CAND1 and TMEM113. Interacts with cyclin E (CCNE1 or CCNE2) and with importins alpha-1 (KPNA2), alpha-3 (KPNA4), alpha-5 (KPNA1) and beta-1 (KPNB1). May interact with WDR26, WDR51B, SNRNP40, WDR61, WDR76 and WDR5. Interacts (unneddylated form) with DCUN1D1, DCUN1D2, DCUN1D3, DCUN1D4 and DCUN1D5; these interactions promote the cullin neddylation.</text>
</comment>
<comment type="subcellular location">
    <subcellularLocation>
        <location evidence="11">Cytoplasm</location>
    </subcellularLocation>
    <subcellularLocation>
        <location evidence="11">Nucleus</location>
    </subcellularLocation>
    <text evidence="11">More concentrated in nuclei than in cytoplasm in germinal vesicle (GV) stage oocytes, zygotes and the 2-cell stage, but distributed in the cytoplasm at the MII-stage oocytes.</text>
</comment>
<comment type="alternative products">
    <event type="alternative splicing"/>
    <isoform>
        <id>A2A432-1</id>
        <name evidence="7 8 9 10">1</name>
        <sequence type="displayed"/>
    </isoform>
    <isoform>
        <id>A2A432-2</id>
        <name evidence="6">2</name>
        <sequence type="described" ref="VSP_039242"/>
    </isoform>
</comment>
<comment type="tissue specificity">
    <text evidence="11">Expressed in oocytes (at protein level).</text>
</comment>
<comment type="developmental stage">
    <text evidence="11">Expressed at high levels in germinal vesicle (GV) stage oocytes and zygotes and at lower levels in MII-stage oocytes and 2-cell stage embryos (PubMed:24357321). Expression decreases from 2-cell stage to blastula (PubMed:24357321).</text>
</comment>
<comment type="PTM">
    <text evidence="2">Neddylated. Deneddylated via its interaction with the COP9 signalosome (CSN) complex (By similarity).</text>
</comment>
<comment type="similarity">
    <text evidence="4">Belongs to the cullin family.</text>
</comment>
<comment type="sequence caution" evidence="15">
    <conflict type="erroneous initiation">
        <sequence resource="EMBL-CDS" id="AAH04026"/>
    </conflict>
    <text>Truncated N-terminus.</text>
</comment>
<comment type="sequence caution" evidence="15">
    <conflict type="erroneous initiation">
        <sequence resource="EMBL-CDS" id="AAH10347"/>
    </conflict>
    <text>Truncated N-terminus.</text>
</comment>
<comment type="sequence caution" evidence="15">
    <conflict type="erroneous initiation">
        <sequence resource="EMBL-CDS" id="BAC41443"/>
    </conflict>
    <text>Truncated N-terminus.</text>
</comment>
<organism>
    <name type="scientific">Mus musculus</name>
    <name type="common">Mouse</name>
    <dbReference type="NCBI Taxonomy" id="10090"/>
    <lineage>
        <taxon>Eukaryota</taxon>
        <taxon>Metazoa</taxon>
        <taxon>Chordata</taxon>
        <taxon>Craniata</taxon>
        <taxon>Vertebrata</taxon>
        <taxon>Euteleostomi</taxon>
        <taxon>Mammalia</taxon>
        <taxon>Eutheria</taxon>
        <taxon>Euarchontoglires</taxon>
        <taxon>Glires</taxon>
        <taxon>Rodentia</taxon>
        <taxon>Myomorpha</taxon>
        <taxon>Muroidea</taxon>
        <taxon>Muridae</taxon>
        <taxon>Murinae</taxon>
        <taxon>Mus</taxon>
        <taxon>Mus</taxon>
    </lineage>
</organism>
<sequence>MSRSTRSKERRENDTDSEDNSSETSNQERRRCRQGPPRPPYPPLLPPVFPPPTPPPQVRRTRGLQDLGAMKSVCPGTSGFSSPNPSAASAAAQEVRSATDGNTSTTPPTSAKKRKLNSSSSSSNSSNEREDFDSTSSSSTPPQPRDSASPSTSSFCLGVPVATSSHVPIQKKLRFEDTLEFVGIDTKMAEESSSSSSSSSPTAATSQQQQQQQLKTKSILISSVASVHHANGLAKSSTAVSSFANSKPGSAKKLVIKNFKDKPKLPENYTDETWQKLKEAVEAIQNSTSIKYNLEELYQAVENLCSHKISANLYKQLRQICEDHIKAQIHQFREDSLDSVLFLKKIDRCWQNHCRQMIMIRSIFLFLDRTYVLQNSMLPSIWDMGLELFRAHIISDQKVQTKTIDGILLLIERERNGEAIDRSLLRSLLSMLSDLQIYQDSFEQQFLQETNRLYAAEGQKLMQEREVPEYLHHVNKRLEEEADRLITYLDQTTQKSLIASVEKQLLGEHLTAILQKGLNSLLDENRIQDLSLLYQLFSRVRGGVQVLLQQWIEYIKAFGSTIVINPEKDKTMVQELLDFKDKVDHIIDTCFLKNEKFINAMKEAFETFINKRPNKPAELIAKYVDSKLRAGNKEATDEELEKMLDKIMIIFRFIYGKDVFEAFYKKDLAKRLLVGKSASVDAEKSMLSKLKHECGAAFTSKLEGMFKDMELSKDIMIQFKQYMQNQNVPGNIELTVNILTMGYWPTYVPMEVHLPPEMVKLQEIFKTFYLGKHSGRKLQWQSTLGHCVLKAEFKEGKKELQVSLFQTMVLLMFNEGEEFSLEEIKHATGIEDGELRRTLQSLACGKARVLAKNPKGKDIEDGDKFICNDDFKHKLFRIKINQIQMKETVEEQASTTERVFQDRQYQIDAAIVRIMKMRKTLSHNLLVSEVYNQLKFPVKPADLKKRIESLIDRDYMERDKENPNQYNYIA</sequence>
<name>CUL4B_MOUSE</name>
<protein>
    <recommendedName>
        <fullName evidence="15">Cullin-4B</fullName>
        <shortName evidence="14">CUL-4B</shortName>
    </recommendedName>
</protein>
<feature type="chain" id="PRO_0000394426" description="Cullin-4B">
    <location>
        <begin position="1"/>
        <end position="970"/>
    </location>
</feature>
<feature type="domain" description="Cullin neddylation" evidence="3">
    <location>
        <begin position="902"/>
        <end position="962"/>
    </location>
</feature>
<feature type="region of interest" description="Disordered" evidence="5">
    <location>
        <begin position="1"/>
        <end position="157"/>
    </location>
</feature>
<feature type="region of interest" description="Disordered" evidence="5">
    <location>
        <begin position="189"/>
        <end position="211"/>
    </location>
</feature>
<feature type="short sequence motif" description="Nuclear localization signal" evidence="2">
    <location>
        <begin position="112"/>
        <end position="115"/>
    </location>
</feature>
<feature type="compositionally biased region" description="Basic and acidic residues" evidence="5">
    <location>
        <begin position="1"/>
        <end position="14"/>
    </location>
</feature>
<feature type="compositionally biased region" description="Pro residues" evidence="5">
    <location>
        <begin position="36"/>
        <end position="57"/>
    </location>
</feature>
<feature type="compositionally biased region" description="Low complexity" evidence="5">
    <location>
        <begin position="78"/>
        <end position="98"/>
    </location>
</feature>
<feature type="compositionally biased region" description="Polar residues" evidence="5">
    <location>
        <begin position="99"/>
        <end position="109"/>
    </location>
</feature>
<feature type="compositionally biased region" description="Low complexity" evidence="5">
    <location>
        <begin position="117"/>
        <end position="126"/>
    </location>
</feature>
<feature type="compositionally biased region" description="Polar residues" evidence="5">
    <location>
        <begin position="146"/>
        <end position="155"/>
    </location>
</feature>
<feature type="compositionally biased region" description="Low complexity" evidence="5">
    <location>
        <begin position="192"/>
        <end position="211"/>
    </location>
</feature>
<feature type="modified residue" description="Phosphothreonine" evidence="25">
    <location>
        <position position="15"/>
    </location>
</feature>
<feature type="modified residue" description="Phosphoserine" evidence="25">
    <location>
        <position position="17"/>
    </location>
</feature>
<feature type="modified residue" description="Phosphothreonine" evidence="25">
    <location>
        <position position="106"/>
    </location>
</feature>
<feature type="modified residue" description="Phosphoserine" evidence="25">
    <location>
        <position position="110"/>
    </location>
</feature>
<feature type="modified residue" description="Phosphoserine" evidence="1">
    <location>
        <position position="154"/>
    </location>
</feature>
<feature type="modified residue" description="Phosphoserine" evidence="2">
    <location>
        <position position="200"/>
    </location>
</feature>
<feature type="modified residue" description="Phosphothreonine" evidence="25">
    <location>
        <position position="202"/>
    </location>
</feature>
<feature type="modified residue" description="Phosphoserine" evidence="2">
    <location>
        <position position="250"/>
    </location>
</feature>
<feature type="cross-link" description="Glycyl lysine isopeptide (Lys-Gly) (interchain with G-Cter in ubiquitin)" evidence="1">
    <location>
        <position position="247"/>
    </location>
</feature>
<feature type="cross-link" description="Glycyl lysine isopeptide (Lys-Gly) (interchain with G-Cter in NEDD8)" evidence="2">
    <location>
        <position position="916"/>
    </location>
</feature>
<feature type="splice variant" id="VSP_039242" description="In isoform 2." evidence="13">
    <location>
        <begin position="693"/>
        <end position="721"/>
    </location>
</feature>
<feature type="sequence conflict" description="In Ref. 2; BAB28222." evidence="15" ref="2">
    <original>P</original>
    <variation>A</variation>
    <location>
        <position position="56"/>
    </location>
</feature>
<feature type="sequence conflict" description="In Ref. 6; BAC41443." evidence="15" ref="6">
    <original>Q</original>
    <variation>E</variation>
    <location>
        <position position="209"/>
    </location>
</feature>
<feature type="sequence conflict" description="In Ref. 2; BAB28222." evidence="15" ref="2">
    <original>K</original>
    <variation>E</variation>
    <location>
        <position position="593"/>
    </location>
</feature>
<feature type="sequence conflict" description="In Ref. 1; AAP84984 and 2; BAC27992." evidence="15" ref="1 2">
    <original>Q</original>
    <variation>R</variation>
    <location>
        <position position="933"/>
    </location>
</feature>
<feature type="sequence conflict" description="In Ref. 6; BAC41443." evidence="15" ref="6">
    <original>Y</original>
    <variation>S</variation>
    <location>
        <position position="966"/>
    </location>
</feature>
<reference evidence="18" key="1">
    <citation type="journal article" date="2005" name="J. Biosci.">
        <title>Cloning and characterization of mouse cullin4B/E3 ubiquitin ligase.</title>
        <authorList>
            <person name="Tripathi R."/>
            <person name="Sastry K.S."/>
            <person name="Kota S.K."/>
            <person name="Srinivas U.K."/>
        </authorList>
    </citation>
    <scope>NUCLEOTIDE SEQUENCE [MRNA] (ISOFORM 1)</scope>
    <scope>IDENTIFICATION BY MASS SPECTROMETRY</scope>
    <source>
        <strain evidence="18">129/Sv</strain>
        <tissue evidence="18">Embryonic carcinoma</tissue>
    </source>
</reference>
<reference evidence="19" key="2">
    <citation type="journal article" date="2005" name="Science">
        <title>The transcriptional landscape of the mammalian genome.</title>
        <authorList>
            <person name="Carninci P."/>
            <person name="Kasukawa T."/>
            <person name="Katayama S."/>
            <person name="Gough J."/>
            <person name="Frith M.C."/>
            <person name="Maeda N."/>
            <person name="Oyama R."/>
            <person name="Ravasi T."/>
            <person name="Lenhard B."/>
            <person name="Wells C."/>
            <person name="Kodzius R."/>
            <person name="Shimokawa K."/>
            <person name="Bajic V.B."/>
            <person name="Brenner S.E."/>
            <person name="Batalov S."/>
            <person name="Forrest A.R."/>
            <person name="Zavolan M."/>
            <person name="Davis M.J."/>
            <person name="Wilming L.G."/>
            <person name="Aidinis V."/>
            <person name="Allen J.E."/>
            <person name="Ambesi-Impiombato A."/>
            <person name="Apweiler R."/>
            <person name="Aturaliya R.N."/>
            <person name="Bailey T.L."/>
            <person name="Bansal M."/>
            <person name="Baxter L."/>
            <person name="Beisel K.W."/>
            <person name="Bersano T."/>
            <person name="Bono H."/>
            <person name="Chalk A.M."/>
            <person name="Chiu K.P."/>
            <person name="Choudhary V."/>
            <person name="Christoffels A."/>
            <person name="Clutterbuck D.R."/>
            <person name="Crowe M.L."/>
            <person name="Dalla E."/>
            <person name="Dalrymple B.P."/>
            <person name="de Bono B."/>
            <person name="Della Gatta G."/>
            <person name="di Bernardo D."/>
            <person name="Down T."/>
            <person name="Engstrom P."/>
            <person name="Fagiolini M."/>
            <person name="Faulkner G."/>
            <person name="Fletcher C.F."/>
            <person name="Fukushima T."/>
            <person name="Furuno M."/>
            <person name="Futaki S."/>
            <person name="Gariboldi M."/>
            <person name="Georgii-Hemming P."/>
            <person name="Gingeras T.R."/>
            <person name="Gojobori T."/>
            <person name="Green R.E."/>
            <person name="Gustincich S."/>
            <person name="Harbers M."/>
            <person name="Hayashi Y."/>
            <person name="Hensch T.K."/>
            <person name="Hirokawa N."/>
            <person name="Hill D."/>
            <person name="Huminiecki L."/>
            <person name="Iacono M."/>
            <person name="Ikeo K."/>
            <person name="Iwama A."/>
            <person name="Ishikawa T."/>
            <person name="Jakt M."/>
            <person name="Kanapin A."/>
            <person name="Katoh M."/>
            <person name="Kawasawa Y."/>
            <person name="Kelso J."/>
            <person name="Kitamura H."/>
            <person name="Kitano H."/>
            <person name="Kollias G."/>
            <person name="Krishnan S.P."/>
            <person name="Kruger A."/>
            <person name="Kummerfeld S.K."/>
            <person name="Kurochkin I.V."/>
            <person name="Lareau L.F."/>
            <person name="Lazarevic D."/>
            <person name="Lipovich L."/>
            <person name="Liu J."/>
            <person name="Liuni S."/>
            <person name="McWilliam S."/>
            <person name="Madan Babu M."/>
            <person name="Madera M."/>
            <person name="Marchionni L."/>
            <person name="Matsuda H."/>
            <person name="Matsuzawa S."/>
            <person name="Miki H."/>
            <person name="Mignone F."/>
            <person name="Miyake S."/>
            <person name="Morris K."/>
            <person name="Mottagui-Tabar S."/>
            <person name="Mulder N."/>
            <person name="Nakano N."/>
            <person name="Nakauchi H."/>
            <person name="Ng P."/>
            <person name="Nilsson R."/>
            <person name="Nishiguchi S."/>
            <person name="Nishikawa S."/>
            <person name="Nori F."/>
            <person name="Ohara O."/>
            <person name="Okazaki Y."/>
            <person name="Orlando V."/>
            <person name="Pang K.C."/>
            <person name="Pavan W.J."/>
            <person name="Pavesi G."/>
            <person name="Pesole G."/>
            <person name="Petrovsky N."/>
            <person name="Piazza S."/>
            <person name="Reed J."/>
            <person name="Reid J.F."/>
            <person name="Ring B.Z."/>
            <person name="Ringwald M."/>
            <person name="Rost B."/>
            <person name="Ruan Y."/>
            <person name="Salzberg S.L."/>
            <person name="Sandelin A."/>
            <person name="Schneider C."/>
            <person name="Schoenbach C."/>
            <person name="Sekiguchi K."/>
            <person name="Semple C.A."/>
            <person name="Seno S."/>
            <person name="Sessa L."/>
            <person name="Sheng Y."/>
            <person name="Shibata Y."/>
            <person name="Shimada H."/>
            <person name="Shimada K."/>
            <person name="Silva D."/>
            <person name="Sinclair B."/>
            <person name="Sperling S."/>
            <person name="Stupka E."/>
            <person name="Sugiura K."/>
            <person name="Sultana R."/>
            <person name="Takenaka Y."/>
            <person name="Taki K."/>
            <person name="Tammoja K."/>
            <person name="Tan S.L."/>
            <person name="Tang S."/>
            <person name="Taylor M.S."/>
            <person name="Tegner J."/>
            <person name="Teichmann S.A."/>
            <person name="Ueda H.R."/>
            <person name="van Nimwegen E."/>
            <person name="Verardo R."/>
            <person name="Wei C.L."/>
            <person name="Yagi K."/>
            <person name="Yamanishi H."/>
            <person name="Zabarovsky E."/>
            <person name="Zhu S."/>
            <person name="Zimmer A."/>
            <person name="Hide W."/>
            <person name="Bult C."/>
            <person name="Grimmond S.M."/>
            <person name="Teasdale R.D."/>
            <person name="Liu E.T."/>
            <person name="Brusic V."/>
            <person name="Quackenbush J."/>
            <person name="Wahlestedt C."/>
            <person name="Mattick J.S."/>
            <person name="Hume D.A."/>
            <person name="Kai C."/>
            <person name="Sasaki D."/>
            <person name="Tomaru Y."/>
            <person name="Fukuda S."/>
            <person name="Kanamori-Katayama M."/>
            <person name="Suzuki M."/>
            <person name="Aoki J."/>
            <person name="Arakawa T."/>
            <person name="Iida J."/>
            <person name="Imamura K."/>
            <person name="Itoh M."/>
            <person name="Kato T."/>
            <person name="Kawaji H."/>
            <person name="Kawagashira N."/>
            <person name="Kawashima T."/>
            <person name="Kojima M."/>
            <person name="Kondo S."/>
            <person name="Konno H."/>
            <person name="Nakano K."/>
            <person name="Ninomiya N."/>
            <person name="Nishio T."/>
            <person name="Okada M."/>
            <person name="Plessy C."/>
            <person name="Shibata K."/>
            <person name="Shiraki T."/>
            <person name="Suzuki S."/>
            <person name="Tagami M."/>
            <person name="Waki K."/>
            <person name="Watahiki A."/>
            <person name="Okamura-Oho Y."/>
            <person name="Suzuki H."/>
            <person name="Kawai J."/>
            <person name="Hayashizaki Y."/>
        </authorList>
    </citation>
    <scope>NUCLEOTIDE SEQUENCE [LARGE SCALE MRNA] (ISOFORM 1)</scope>
    <source>
        <strain evidence="19">C57BL/6J</strain>
        <tissue evidence="21">Embryonic head</tissue>
        <tissue evidence="21">Head</tissue>
        <tissue evidence="19">Wolffian duct</tissue>
    </source>
</reference>
<reference evidence="22" key="3">
    <citation type="journal article" date="2009" name="PLoS Biol.">
        <title>Lineage-specific biology revealed by a finished genome assembly of the mouse.</title>
        <authorList>
            <person name="Church D.M."/>
            <person name="Goodstadt L."/>
            <person name="Hillier L.W."/>
            <person name="Zody M.C."/>
            <person name="Goldstein S."/>
            <person name="She X."/>
            <person name="Bult C.J."/>
            <person name="Agarwala R."/>
            <person name="Cherry J.L."/>
            <person name="DiCuccio M."/>
            <person name="Hlavina W."/>
            <person name="Kapustin Y."/>
            <person name="Meric P."/>
            <person name="Maglott D."/>
            <person name="Birtle Z."/>
            <person name="Marques A.C."/>
            <person name="Graves T."/>
            <person name="Zhou S."/>
            <person name="Teague B."/>
            <person name="Potamousis K."/>
            <person name="Churas C."/>
            <person name="Place M."/>
            <person name="Herschleb J."/>
            <person name="Runnheim R."/>
            <person name="Forrest D."/>
            <person name="Amos-Landgraf J."/>
            <person name="Schwartz D.C."/>
            <person name="Cheng Z."/>
            <person name="Lindblad-Toh K."/>
            <person name="Eichler E.E."/>
            <person name="Ponting C.P."/>
        </authorList>
    </citation>
    <scope>NUCLEOTIDE SEQUENCE [LARGE SCALE GENOMIC DNA]</scope>
    <source>
        <strain>C57BL/6J</strain>
    </source>
</reference>
<reference evidence="23" key="4">
    <citation type="submission" date="2005-07" db="EMBL/GenBank/DDBJ databases">
        <authorList>
            <person name="Mural R.J."/>
            <person name="Adams M.D."/>
            <person name="Myers E.W."/>
            <person name="Smith H.O."/>
            <person name="Venter J.C."/>
        </authorList>
    </citation>
    <scope>NUCLEOTIDE SEQUENCE [LARGE SCALE GENOMIC DNA]</scope>
</reference>
<reference evidence="16" key="5">
    <citation type="journal article" date="2004" name="Genome Res.">
        <title>The status, quality, and expansion of the NIH full-length cDNA project: the Mammalian Gene Collection (MGC).</title>
        <authorList>
            <consortium name="The MGC Project Team"/>
        </authorList>
    </citation>
    <scope>NUCLEOTIDE SEQUENCE [LARGE SCALE MRNA] (ISOFORM 1)</scope>
    <source>
        <strain evidence="16">Czech II</strain>
        <strain evidence="17">FVB/N</strain>
        <tissue evidence="16">Mammary tumor</tissue>
    </source>
</reference>
<reference evidence="20" key="6">
    <citation type="journal article" date="2002" name="DNA Res.">
        <title>Prediction of the coding sequences of mouse homologues of KIAA gene: I. The complete nucleotide sequences of 100 mouse KIAA-homologous cDNAs identified by screening of terminal sequences of cDNA clones randomly sampled from size-fractionated libraries.</title>
        <authorList>
            <person name="Okazaki N."/>
            <person name="Kikuno R."/>
            <person name="Ohara R."/>
            <person name="Inamoto S."/>
            <person name="Hara Y."/>
            <person name="Nagase T."/>
            <person name="Ohara O."/>
            <person name="Koga H."/>
        </authorList>
    </citation>
    <scope>NUCLEOTIDE SEQUENCE [LARGE SCALE MRNA] OF 204-970 (ISOFORM 2)</scope>
    <source>
        <tissue evidence="20">Brain</tissue>
    </source>
</reference>
<reference key="7">
    <citation type="journal article" date="2007" name="Proc. Natl. Acad. Sci. U.S.A.">
        <title>Large-scale phosphorylation analysis of mouse liver.</title>
        <authorList>
            <person name="Villen J."/>
            <person name="Beausoleil S.A."/>
            <person name="Gerber S.A."/>
            <person name="Gygi S.P."/>
        </authorList>
    </citation>
    <scope>IDENTIFICATION BY MASS SPECTROMETRY [LARGE SCALE ANALYSIS]</scope>
    <source>
        <tissue>Liver</tissue>
    </source>
</reference>
<reference key="8">
    <citation type="journal article" date="2010" name="Cell">
        <title>A tissue-specific atlas of mouse protein phosphorylation and expression.</title>
        <authorList>
            <person name="Huttlin E.L."/>
            <person name="Jedrychowski M.P."/>
            <person name="Elias J.E."/>
            <person name="Goswami T."/>
            <person name="Rad R."/>
            <person name="Beausoleil S.A."/>
            <person name="Villen J."/>
            <person name="Haas W."/>
            <person name="Sowa M.E."/>
            <person name="Gygi S.P."/>
        </authorList>
    </citation>
    <scope>PHOSPHORYLATION [LARGE SCALE ANALYSIS] AT THR-15; SER-17; THR-106; SER-110 AND THR-202</scope>
    <scope>IDENTIFICATION BY MASS SPECTROMETRY [LARGE SCALE ANALYSIS]</scope>
    <source>
        <tissue>Brain</tissue>
        <tissue>Brown adipose tissue</tissue>
        <tissue>Kidney</tissue>
        <tissue>Liver</tissue>
        <tissue>Lung</tissue>
        <tissue>Pancreas</tissue>
        <tissue>Spleen</tissue>
        <tissue>Testis</tissue>
    </source>
</reference>
<reference key="9">
    <citation type="journal article" date="2013" name="Science">
        <title>CRL4 complex regulates mammalian oocyte survival and reprogramming by activation of TET proteins.</title>
        <authorList>
            <person name="Yu C."/>
            <person name="Zhang Y.L."/>
            <person name="Pan W.W."/>
            <person name="Li X.M."/>
            <person name="Wang Z.W."/>
            <person name="Ge Z.J."/>
            <person name="Zhou J.J."/>
            <person name="Cang Y."/>
            <person name="Tong C."/>
            <person name="Sun Q.Y."/>
            <person name="Fan H.Y."/>
        </authorList>
    </citation>
    <scope>SUBCELLULAR LOCATION</scope>
    <scope>TISSUE SPECIFICITY</scope>
    <scope>DEVELOPMENTAL STAGE</scope>
</reference>
<reference key="10">
    <citation type="journal article" date="2022" name="Cell Death Differ.">
        <title>Cullin 4b-RING ubiquitin ligase targets IRGM1 to regulate Wnt signaling and intestinal homeostasis.</title>
        <authorList>
            <person name="Fan Y."/>
            <person name="Huo X."/>
            <person name="Guo B."/>
            <person name="Zhang X."/>
            <person name="Yang Y."/>
            <person name="Lian J."/>
            <person name="Meng X."/>
            <person name="Shao Y."/>
            <person name="Zou Y."/>
            <person name="Guo H."/>
            <person name="Wang H."/>
            <person name="Sun G."/>
            <person name="Dou H."/>
            <person name="Wang J."/>
            <person name="Shao C."/>
            <person name="Gong Y."/>
            <person name="Hu H."/>
        </authorList>
    </citation>
    <scope>FUNCTION</scope>
    <scope>PATHWAY</scope>
    <scope>IDENTIFICATION IN THE DCX(WDR77) COMPLEX</scope>
</reference>
<gene>
    <name evidence="14 24" type="primary">Cul4b</name>
    <name evidence="13" type="synonym">Kiaa0695</name>
</gene>
<keyword id="KW-0025">Alternative splicing</keyword>
<keyword id="KW-0131">Cell cycle</keyword>
<keyword id="KW-0963">Cytoplasm</keyword>
<keyword id="KW-0227">DNA damage</keyword>
<keyword id="KW-0234">DNA repair</keyword>
<keyword id="KW-1017">Isopeptide bond</keyword>
<keyword id="KW-0539">Nucleus</keyword>
<keyword id="KW-0597">Phosphoprotein</keyword>
<keyword id="KW-1185">Reference proteome</keyword>
<keyword id="KW-0832">Ubl conjugation</keyword>
<keyword id="KW-0833">Ubl conjugation pathway</keyword>